<dbReference type="EMBL" id="EU421934">
    <property type="protein sequence ID" value="ABZ82351.1"/>
    <property type="molecule type" value="mRNA"/>
</dbReference>
<dbReference type="EMBL" id="EU421935">
    <property type="protein sequence ID" value="ABZ82352.1"/>
    <property type="molecule type" value="mRNA"/>
</dbReference>
<dbReference type="EMBL" id="EU421936">
    <property type="protein sequence ID" value="ABZ82353.1"/>
    <property type="molecule type" value="mRNA"/>
</dbReference>
<dbReference type="EMBL" id="EU421937">
    <property type="protein sequence ID" value="ABZ82354.1"/>
    <property type="molecule type" value="mRNA"/>
</dbReference>
<dbReference type="SMR" id="B1A4R0"/>
<dbReference type="GO" id="GO:0005576">
    <property type="term" value="C:extracellular region"/>
    <property type="evidence" value="ECO:0007669"/>
    <property type="project" value="UniProtKB-SubCell"/>
</dbReference>
<dbReference type="GO" id="GO:0030246">
    <property type="term" value="F:carbohydrate binding"/>
    <property type="evidence" value="ECO:0007669"/>
    <property type="project" value="UniProtKB-KW"/>
</dbReference>
<dbReference type="GO" id="GO:0019834">
    <property type="term" value="F:phospholipase A2 inhibitor activity"/>
    <property type="evidence" value="ECO:0007669"/>
    <property type="project" value="UniProtKB-KW"/>
</dbReference>
<dbReference type="Gene3D" id="3.10.100.10">
    <property type="entry name" value="Mannose-Binding Protein A, subunit A"/>
    <property type="match status" value="1"/>
</dbReference>
<dbReference type="InterPro" id="IPR001304">
    <property type="entry name" value="C-type_lectin-like"/>
</dbReference>
<dbReference type="InterPro" id="IPR016186">
    <property type="entry name" value="C-type_lectin-like/link_sf"/>
</dbReference>
<dbReference type="InterPro" id="IPR018378">
    <property type="entry name" value="C-type_lectin_CS"/>
</dbReference>
<dbReference type="InterPro" id="IPR016187">
    <property type="entry name" value="CTDL_fold"/>
</dbReference>
<dbReference type="Pfam" id="PF00059">
    <property type="entry name" value="Lectin_C"/>
    <property type="match status" value="1"/>
</dbReference>
<dbReference type="SUPFAM" id="SSF56436">
    <property type="entry name" value="C-type lectin-like"/>
    <property type="match status" value="1"/>
</dbReference>
<dbReference type="PROSITE" id="PS00615">
    <property type="entry name" value="C_TYPE_LECTIN_1"/>
    <property type="match status" value="1"/>
</dbReference>
<dbReference type="PROSITE" id="PS50041">
    <property type="entry name" value="C_TYPE_LECTIN_2"/>
    <property type="match status" value="1"/>
</dbReference>
<proteinExistence type="evidence at transcript level"/>
<feature type="signal peptide" evidence="1">
    <location>
        <begin position="1"/>
        <end position="19"/>
    </location>
</feature>
<feature type="chain" id="PRO_0000356352" description="Phospholipase A2 inhibitor clone 02/03/06/07">
    <location>
        <begin position="20"/>
        <end position="166"/>
    </location>
</feature>
<feature type="domain" description="C-type lectin" evidence="5">
    <location>
        <begin position="46"/>
        <end position="161"/>
    </location>
</feature>
<feature type="glycosylation site" description="N-linked (GlcNAc...) asparagine" evidence="4">
    <location>
        <position position="122"/>
    </location>
</feature>
<feature type="disulfide bond" evidence="3">
    <location>
        <begin position="83"/>
        <end position="160"/>
    </location>
</feature>
<feature type="disulfide bond" evidence="3">
    <location>
        <begin position="138"/>
        <end position="152"/>
    </location>
</feature>
<evidence type="ECO:0000250" key="1"/>
<evidence type="ECO:0000250" key="2">
    <source>
        <dbReference type="UniProtKB" id="A1XRN2"/>
    </source>
</evidence>
<evidence type="ECO:0000250" key="3">
    <source>
        <dbReference type="UniProtKB" id="P21755"/>
    </source>
</evidence>
<evidence type="ECO:0000255" key="4"/>
<evidence type="ECO:0000255" key="5">
    <source>
        <dbReference type="PROSITE-ProRule" id="PRU00040"/>
    </source>
</evidence>
<evidence type="ECO:0000305" key="6"/>
<evidence type="ECO:0000305" key="7">
    <source ref="1"/>
</evidence>
<accession>B1A4R0</accession>
<sequence>MRLILLSGLLLLGTFLANGHDTDPEGQMLNSVIESVMILQREFANLKHAFLTVHKARSFGSGSERLYVSNKEIGKFEALKEICDQAGGHIPSPQFENQNKAFANVLERHNKEAYLVVDDPANFTNWAAGQPNEADGTCVKADTHGSWHSASCDDNLLVVCEFYFIL</sequence>
<comment type="function">
    <text evidence="1">This phospholipase A2 inhibitor binds directly phospholipase A2 in the presence or absence of calcium.</text>
</comment>
<comment type="subunit">
    <text evidence="2">Homotrimer; non-covalently linked.</text>
</comment>
<comment type="subcellular location">
    <subcellularLocation>
        <location evidence="7">Secreted</location>
    </subcellularLocation>
    <text evidence="6">Secreted in plasma.</text>
</comment>
<comment type="tissue specificity">
    <text evidence="7">Expressed by the liver.</text>
</comment>
<comment type="similarity">
    <text evidence="6">Belongs to the alpha-type phospholipase A2 inhibitor family.</text>
</comment>
<name>PLIA2_LACMU</name>
<organism>
    <name type="scientific">Lachesis muta muta</name>
    <name type="common">Bushmaster</name>
    <dbReference type="NCBI Taxonomy" id="8753"/>
    <lineage>
        <taxon>Eukaryota</taxon>
        <taxon>Metazoa</taxon>
        <taxon>Chordata</taxon>
        <taxon>Craniata</taxon>
        <taxon>Vertebrata</taxon>
        <taxon>Euteleostomi</taxon>
        <taxon>Lepidosauria</taxon>
        <taxon>Squamata</taxon>
        <taxon>Bifurcata</taxon>
        <taxon>Unidentata</taxon>
        <taxon>Episquamata</taxon>
        <taxon>Toxicofera</taxon>
        <taxon>Serpentes</taxon>
        <taxon>Colubroidea</taxon>
        <taxon>Viperidae</taxon>
        <taxon>Crotalinae</taxon>
        <taxon>Lachesis</taxon>
    </lineage>
</organism>
<reference key="1">
    <citation type="submission" date="2008-01" db="EMBL/GenBank/DDBJ databases">
        <title>A profile of the phospholipase A2 inhibitors of the alpha class prospected in Brazilian Crotalidae snakes: structural and phylogenetic analysis.</title>
        <authorList>
            <person name="Estevao-Costa M.I."/>
            <person name="Costa M.A.F."/>
            <person name="Mudado M.A."/>
            <person name="Franco G.R."/>
            <person name="Fortes-Dias C.L."/>
        </authorList>
    </citation>
    <scope>NUCLEOTIDE SEQUENCE [MRNA]</scope>
    <source>
        <tissue>Liver</tissue>
    </source>
</reference>
<protein>
    <recommendedName>
        <fullName>Phospholipase A2 inhibitor clone 02/03/06/07</fullName>
        <shortName>alpha-PLI</shortName>
    </recommendedName>
</protein>
<keyword id="KW-0106">Calcium</keyword>
<keyword id="KW-1015">Disulfide bond</keyword>
<keyword id="KW-0325">Glycoprotein</keyword>
<keyword id="KW-0430">Lectin</keyword>
<keyword id="KW-0593">Phospholipase A2 inhibitor</keyword>
<keyword id="KW-0964">Secreted</keyword>
<keyword id="KW-0732">Signal</keyword>